<dbReference type="EMBL" id="AP009351">
    <property type="protein sequence ID" value="BAF68283.1"/>
    <property type="molecule type" value="Genomic_DNA"/>
</dbReference>
<dbReference type="RefSeq" id="WP_000140679.1">
    <property type="nucleotide sequence ID" value="NZ_JBBIAE010000008.1"/>
</dbReference>
<dbReference type="SMR" id="A6QIV1"/>
<dbReference type="KEGG" id="sae:NWMN_2011"/>
<dbReference type="HOGENOM" id="CLU_079215_4_2_9"/>
<dbReference type="Proteomes" id="UP000006386">
    <property type="component" value="Chromosome"/>
</dbReference>
<dbReference type="GO" id="GO:0005886">
    <property type="term" value="C:plasma membrane"/>
    <property type="evidence" value="ECO:0007669"/>
    <property type="project" value="UniProtKB-SubCell"/>
</dbReference>
<dbReference type="GO" id="GO:0045259">
    <property type="term" value="C:proton-transporting ATP synthase complex"/>
    <property type="evidence" value="ECO:0007669"/>
    <property type="project" value="UniProtKB-KW"/>
</dbReference>
<dbReference type="GO" id="GO:0046933">
    <property type="term" value="F:proton-transporting ATP synthase activity, rotational mechanism"/>
    <property type="evidence" value="ECO:0007669"/>
    <property type="project" value="UniProtKB-UniRule"/>
</dbReference>
<dbReference type="GO" id="GO:0046961">
    <property type="term" value="F:proton-transporting ATPase activity, rotational mechanism"/>
    <property type="evidence" value="ECO:0007669"/>
    <property type="project" value="TreeGrafter"/>
</dbReference>
<dbReference type="CDD" id="cd06503">
    <property type="entry name" value="ATP-synt_Fo_b"/>
    <property type="match status" value="1"/>
</dbReference>
<dbReference type="HAMAP" id="MF_01398">
    <property type="entry name" value="ATP_synth_b_bprime"/>
    <property type="match status" value="1"/>
</dbReference>
<dbReference type="InterPro" id="IPR028987">
    <property type="entry name" value="ATP_synth_B-like_membr_sf"/>
</dbReference>
<dbReference type="InterPro" id="IPR002146">
    <property type="entry name" value="ATP_synth_b/b'su_bac/chlpt"/>
</dbReference>
<dbReference type="InterPro" id="IPR005864">
    <property type="entry name" value="ATP_synth_F0_bsu_bac"/>
</dbReference>
<dbReference type="InterPro" id="IPR050059">
    <property type="entry name" value="ATP_synthase_B_chain"/>
</dbReference>
<dbReference type="NCBIfam" id="TIGR01144">
    <property type="entry name" value="ATP_synt_b"/>
    <property type="match status" value="1"/>
</dbReference>
<dbReference type="NCBIfam" id="NF009987">
    <property type="entry name" value="PRK13453.1"/>
    <property type="match status" value="1"/>
</dbReference>
<dbReference type="PANTHER" id="PTHR33445:SF1">
    <property type="entry name" value="ATP SYNTHASE SUBUNIT B"/>
    <property type="match status" value="1"/>
</dbReference>
<dbReference type="PANTHER" id="PTHR33445">
    <property type="entry name" value="ATP SYNTHASE SUBUNIT B', CHLOROPLASTIC"/>
    <property type="match status" value="1"/>
</dbReference>
<dbReference type="Pfam" id="PF00430">
    <property type="entry name" value="ATP-synt_B"/>
    <property type="match status" value="1"/>
</dbReference>
<dbReference type="SUPFAM" id="SSF81573">
    <property type="entry name" value="F1F0 ATP synthase subunit B, membrane domain"/>
    <property type="match status" value="1"/>
</dbReference>
<organism>
    <name type="scientific">Staphylococcus aureus (strain Newman)</name>
    <dbReference type="NCBI Taxonomy" id="426430"/>
    <lineage>
        <taxon>Bacteria</taxon>
        <taxon>Bacillati</taxon>
        <taxon>Bacillota</taxon>
        <taxon>Bacilli</taxon>
        <taxon>Bacillales</taxon>
        <taxon>Staphylococcaceae</taxon>
        <taxon>Staphylococcus</taxon>
    </lineage>
</organism>
<proteinExistence type="inferred from homology"/>
<sequence length="173" mass="19539">MTETANLFVLGAAGGVEWGTVIVQVLTFIVLLALLKKFAWGPLKDVMDKRERDINRDIDDAEQAKLNAQKLEEENKQKLKETQEEVQKILEDAKVQARQQQEQIIHEANVRANGMIETAQSEINSQKERAIADINNQVSELSVLIASKVLRKEISEQDQKALVDKYLKEAGDK</sequence>
<accession>A6QIV1</accession>
<protein>
    <recommendedName>
        <fullName evidence="1">ATP synthase subunit b</fullName>
    </recommendedName>
    <alternativeName>
        <fullName evidence="1">ATP synthase F(0) sector subunit b</fullName>
    </alternativeName>
    <alternativeName>
        <fullName evidence="1">ATPase subunit I</fullName>
    </alternativeName>
    <alternativeName>
        <fullName evidence="1">F-type ATPase subunit b</fullName>
        <shortName evidence="1">F-ATPase subunit b</shortName>
    </alternativeName>
</protein>
<evidence type="ECO:0000255" key="1">
    <source>
        <dbReference type="HAMAP-Rule" id="MF_01398"/>
    </source>
</evidence>
<gene>
    <name evidence="1" type="primary">atpF</name>
    <name type="ordered locus">NWMN_2011</name>
</gene>
<name>ATPF_STAAE</name>
<reference key="1">
    <citation type="journal article" date="2008" name="J. Bacteriol.">
        <title>Genome sequence of Staphylococcus aureus strain Newman and comparative analysis of staphylococcal genomes: polymorphism and evolution of two major pathogenicity islands.</title>
        <authorList>
            <person name="Baba T."/>
            <person name="Bae T."/>
            <person name="Schneewind O."/>
            <person name="Takeuchi F."/>
            <person name="Hiramatsu K."/>
        </authorList>
    </citation>
    <scope>NUCLEOTIDE SEQUENCE [LARGE SCALE GENOMIC DNA]</scope>
    <source>
        <strain>Newman</strain>
    </source>
</reference>
<keyword id="KW-0066">ATP synthesis</keyword>
<keyword id="KW-1003">Cell membrane</keyword>
<keyword id="KW-0138">CF(0)</keyword>
<keyword id="KW-0375">Hydrogen ion transport</keyword>
<keyword id="KW-0406">Ion transport</keyword>
<keyword id="KW-0472">Membrane</keyword>
<keyword id="KW-0812">Transmembrane</keyword>
<keyword id="KW-1133">Transmembrane helix</keyword>
<keyword id="KW-0813">Transport</keyword>
<comment type="function">
    <text evidence="1">F(1)F(0) ATP synthase produces ATP from ADP in the presence of a proton or sodium gradient. F-type ATPases consist of two structural domains, F(1) containing the extramembraneous catalytic core and F(0) containing the membrane proton channel, linked together by a central stalk and a peripheral stalk. During catalysis, ATP synthesis in the catalytic domain of F(1) is coupled via a rotary mechanism of the central stalk subunits to proton translocation.</text>
</comment>
<comment type="function">
    <text evidence="1">Component of the F(0) channel, it forms part of the peripheral stalk, linking F(1) to F(0).</text>
</comment>
<comment type="subunit">
    <text evidence="1">F-type ATPases have 2 components, F(1) - the catalytic core - and F(0) - the membrane proton channel. F(1) has five subunits: alpha(3), beta(3), gamma(1), delta(1), epsilon(1). F(0) has three main subunits: a(1), b(2) and c(10-14). The alpha and beta chains form an alternating ring which encloses part of the gamma chain. F(1) is attached to F(0) by a central stalk formed by the gamma and epsilon chains, while a peripheral stalk is formed by the delta and b chains.</text>
</comment>
<comment type="subcellular location">
    <subcellularLocation>
        <location evidence="1">Cell membrane</location>
        <topology evidence="1">Single-pass membrane protein</topology>
    </subcellularLocation>
</comment>
<comment type="similarity">
    <text evidence="1">Belongs to the ATPase B chain family.</text>
</comment>
<feature type="chain" id="PRO_0000368787" description="ATP synthase subunit b">
    <location>
        <begin position="1"/>
        <end position="173"/>
    </location>
</feature>
<feature type="transmembrane region" description="Helical" evidence="1">
    <location>
        <begin position="15"/>
        <end position="35"/>
    </location>
</feature>